<proteinExistence type="evidence at protein level"/>
<feature type="chain" id="PRO_0000434858" description="Protein TIFY 11d">
    <location>
        <begin position="1"/>
        <end position="171"/>
    </location>
</feature>
<feature type="domain" description="Tify" evidence="3">
    <location>
        <begin position="65"/>
        <end position="100"/>
    </location>
</feature>
<feature type="short sequence motif" description="Jas" evidence="2">
    <location>
        <begin position="117"/>
        <end position="142"/>
    </location>
</feature>
<feature type="short sequence motif" description="Nuclear localization signal" evidence="4">
    <location>
        <begin position="119"/>
        <end position="126"/>
    </location>
</feature>
<accession>Q7XEZ1</accession>
<accession>A0A0P0XTU4</accession>
<name>TI11D_ORYSJ</name>
<dbReference type="EMBL" id="DP000086">
    <property type="protein sequence ID" value="AAP53568.1"/>
    <property type="molecule type" value="Genomic_DNA"/>
</dbReference>
<dbReference type="EMBL" id="AP008216">
    <property type="protein sequence ID" value="BAF26427.1"/>
    <property type="molecule type" value="Genomic_DNA"/>
</dbReference>
<dbReference type="EMBL" id="AP014966">
    <property type="protein sequence ID" value="BAT10677.1"/>
    <property type="molecule type" value="Genomic_DNA"/>
</dbReference>
<dbReference type="EMBL" id="CM000147">
    <property type="protein sequence ID" value="EAZ15950.1"/>
    <property type="molecule type" value="Genomic_DNA"/>
</dbReference>
<dbReference type="EMBL" id="AK061602">
    <property type="protein sequence ID" value="BAG88033.1"/>
    <property type="molecule type" value="mRNA"/>
</dbReference>
<dbReference type="RefSeq" id="XP_015613048.1">
    <property type="nucleotide sequence ID" value="XM_015757562.1"/>
</dbReference>
<dbReference type="SMR" id="Q7XEZ1"/>
<dbReference type="STRING" id="39947.Q7XEZ1"/>
<dbReference type="PaxDb" id="39947-Q7XEZ1"/>
<dbReference type="EnsemblPlants" id="Os10t0392400-01">
    <property type="protein sequence ID" value="Os10t0392400-01"/>
    <property type="gene ID" value="Os10g0392400"/>
</dbReference>
<dbReference type="Gramene" id="Os10t0392400-01">
    <property type="protein sequence ID" value="Os10t0392400-01"/>
    <property type="gene ID" value="Os10g0392400"/>
</dbReference>
<dbReference type="KEGG" id="dosa:Os10g0392400"/>
<dbReference type="eggNOG" id="ENOG502R4B9">
    <property type="taxonomic scope" value="Eukaryota"/>
</dbReference>
<dbReference type="HOGENOM" id="CLU_051749_3_0_1"/>
<dbReference type="InParanoid" id="Q7XEZ1"/>
<dbReference type="OMA" id="IFYEGRM"/>
<dbReference type="OrthoDB" id="694307at2759"/>
<dbReference type="PlantReactome" id="R-OSA-6787011">
    <property type="pathway name" value="Jasmonic acid signaling"/>
</dbReference>
<dbReference type="PlantReactome" id="R-OSA-6788019">
    <property type="pathway name" value="Salicylic acid signaling"/>
</dbReference>
<dbReference type="Proteomes" id="UP000000763">
    <property type="component" value="Chromosome 10"/>
</dbReference>
<dbReference type="Proteomes" id="UP000007752">
    <property type="component" value="Chromosome 10"/>
</dbReference>
<dbReference type="Proteomes" id="UP000059680">
    <property type="component" value="Chromosome 10"/>
</dbReference>
<dbReference type="GO" id="GO:0005634">
    <property type="term" value="C:nucleus"/>
    <property type="evidence" value="ECO:0000318"/>
    <property type="project" value="GO_Central"/>
</dbReference>
<dbReference type="GO" id="GO:0031347">
    <property type="term" value="P:regulation of defense response"/>
    <property type="evidence" value="ECO:0000318"/>
    <property type="project" value="GO_Central"/>
</dbReference>
<dbReference type="GO" id="GO:2000022">
    <property type="term" value="P:regulation of jasmonic acid mediated signaling pathway"/>
    <property type="evidence" value="ECO:0000318"/>
    <property type="project" value="GO_Central"/>
</dbReference>
<dbReference type="GO" id="GO:0009611">
    <property type="term" value="P:response to wounding"/>
    <property type="evidence" value="ECO:0000318"/>
    <property type="project" value="GO_Central"/>
</dbReference>
<dbReference type="InterPro" id="IPR018467">
    <property type="entry name" value="CCT_CS"/>
</dbReference>
<dbReference type="InterPro" id="IPR040390">
    <property type="entry name" value="TIFY/JAZ"/>
</dbReference>
<dbReference type="InterPro" id="IPR010399">
    <property type="entry name" value="Tify_dom"/>
</dbReference>
<dbReference type="PANTHER" id="PTHR33077:SF52">
    <property type="entry name" value="PROTEIN TIFY 11D"/>
    <property type="match status" value="1"/>
</dbReference>
<dbReference type="PANTHER" id="PTHR33077">
    <property type="entry name" value="PROTEIN TIFY 4A-RELATED-RELATED"/>
    <property type="match status" value="1"/>
</dbReference>
<dbReference type="Pfam" id="PF09425">
    <property type="entry name" value="Jas_motif"/>
    <property type="match status" value="1"/>
</dbReference>
<dbReference type="Pfam" id="PF06200">
    <property type="entry name" value="tify"/>
    <property type="match status" value="1"/>
</dbReference>
<dbReference type="SMART" id="SM00979">
    <property type="entry name" value="TIFY"/>
    <property type="match status" value="1"/>
</dbReference>
<dbReference type="PROSITE" id="PS51320">
    <property type="entry name" value="TIFY"/>
    <property type="match status" value="1"/>
</dbReference>
<evidence type="ECO:0000250" key="1">
    <source>
        <dbReference type="UniProtKB" id="Q7XPM8"/>
    </source>
</evidence>
<evidence type="ECO:0000255" key="2"/>
<evidence type="ECO:0000255" key="3">
    <source>
        <dbReference type="PROSITE-ProRule" id="PRU00650"/>
    </source>
</evidence>
<evidence type="ECO:0000255" key="4">
    <source>
        <dbReference type="PROSITE-ProRule" id="PRU00768"/>
    </source>
</evidence>
<evidence type="ECO:0000269" key="5">
    <source>
    </source>
</evidence>
<evidence type="ECO:0000269" key="6">
    <source>
    </source>
</evidence>
<evidence type="ECO:0000269" key="7">
    <source>
    </source>
</evidence>
<evidence type="ECO:0000303" key="8">
    <source>
    </source>
</evidence>
<evidence type="ECO:0000303" key="9">
    <source>
    </source>
</evidence>
<evidence type="ECO:0000305" key="10"/>
<evidence type="ECO:0000305" key="11">
    <source>
    </source>
</evidence>
<evidence type="ECO:0000312" key="12">
    <source>
        <dbReference type="EMBL" id="AAP53568.1"/>
    </source>
</evidence>
<evidence type="ECO:0000312" key="13">
    <source>
        <dbReference type="EMBL" id="BAF26427.1"/>
    </source>
</evidence>
<evidence type="ECO:0000312" key="14">
    <source>
        <dbReference type="EMBL" id="EAZ15950.1"/>
    </source>
</evidence>
<organism>
    <name type="scientific">Oryza sativa subsp. japonica</name>
    <name type="common">Rice</name>
    <dbReference type="NCBI Taxonomy" id="39947"/>
    <lineage>
        <taxon>Eukaryota</taxon>
        <taxon>Viridiplantae</taxon>
        <taxon>Streptophyta</taxon>
        <taxon>Embryophyta</taxon>
        <taxon>Tracheophyta</taxon>
        <taxon>Spermatophyta</taxon>
        <taxon>Magnoliopsida</taxon>
        <taxon>Liliopsida</taxon>
        <taxon>Poales</taxon>
        <taxon>Poaceae</taxon>
        <taxon>BOP clade</taxon>
        <taxon>Oryzoideae</taxon>
        <taxon>Oryzeae</taxon>
        <taxon>Oryzinae</taxon>
        <taxon>Oryza</taxon>
        <taxon>Oryza sativa</taxon>
    </lineage>
</organism>
<comment type="function">
    <text evidence="1 6">Repressor of jasmonate (JA) responses (By similarity). May act on an initial response of JA-regulated gene expression toward drought tolerance as part of a BHLH148-TIFY11D/JAZ12-COI1A complex (PubMed:21332845).</text>
</comment>
<comment type="subunit">
    <text evidence="6 7">Interacts with BHLH148 and COI1A (PubMed:21332845). Interacts with COI1A, COI1B and COI2 in a coronatine-dependent manner. Coronatine is an analog of jasmonoyl isoleucine (JA-Ile) (PubMed:23320078).</text>
</comment>
<comment type="subcellular location">
    <subcellularLocation>
        <location evidence="4">Nucleus</location>
    </subcellularLocation>
</comment>
<comment type="induction">
    <text evidence="5">By jasmonate, wounding, and cold, drought and salt stresses. Down-regulated by abscisic acid (ABA).</text>
</comment>
<comment type="domain">
    <text evidence="1">The jas domain (117-142) is required for interaction with COI1.</text>
</comment>
<comment type="PTM">
    <text evidence="6 11">Ubiquitinated (Probable). Increase in jasmonoyl isoleucine (JA-Ile) levels mediates its degradation via COI1A-mediated proteasome pathway (PubMed:21332845).</text>
</comment>
<comment type="similarity">
    <text evidence="10">Belongs to the TIFY/JAZ family.</text>
</comment>
<keyword id="KW-1184">Jasmonic acid signaling pathway</keyword>
<keyword id="KW-0539">Nucleus</keyword>
<keyword id="KW-1185">Reference proteome</keyword>
<keyword id="KW-0346">Stress response</keyword>
<keyword id="KW-0804">Transcription</keyword>
<keyword id="KW-0805">Transcription regulation</keyword>
<keyword id="KW-0832">Ubl conjugation</keyword>
<reference key="1">
    <citation type="journal article" date="2003" name="Science">
        <title>In-depth view of structure, activity, and evolution of rice chromosome 10.</title>
        <authorList>
            <person name="Yu Y."/>
            <person name="Rambo T."/>
            <person name="Currie J."/>
            <person name="Saski C."/>
            <person name="Kim H.-R."/>
            <person name="Collura K."/>
            <person name="Thompson S."/>
            <person name="Simmons J."/>
            <person name="Yang T.-J."/>
            <person name="Nah G."/>
            <person name="Patel A.J."/>
            <person name="Thurmond S."/>
            <person name="Henry D."/>
            <person name="Oates R."/>
            <person name="Palmer M."/>
            <person name="Pries G."/>
            <person name="Gibson J."/>
            <person name="Anderson H."/>
            <person name="Paradkar M."/>
            <person name="Crane L."/>
            <person name="Dale J."/>
            <person name="Carver M.B."/>
            <person name="Wood T."/>
            <person name="Frisch D."/>
            <person name="Engler F."/>
            <person name="Soderlund C."/>
            <person name="Palmer L.E."/>
            <person name="Teytelman L."/>
            <person name="Nascimento L."/>
            <person name="De la Bastide M."/>
            <person name="Spiegel L."/>
            <person name="Ware D."/>
            <person name="O'Shaughnessy A."/>
            <person name="Dike S."/>
            <person name="Dedhia N."/>
            <person name="Preston R."/>
            <person name="Huang E."/>
            <person name="Ferraro K."/>
            <person name="Kuit K."/>
            <person name="Miller B."/>
            <person name="Zutavern T."/>
            <person name="Katzenberger F."/>
            <person name="Muller S."/>
            <person name="Balija V."/>
            <person name="Martienssen R.A."/>
            <person name="Stein L."/>
            <person name="Minx P."/>
            <person name="Johnson D."/>
            <person name="Cordum H."/>
            <person name="Mardis E."/>
            <person name="Cheng Z."/>
            <person name="Jiang J."/>
            <person name="Wilson R."/>
            <person name="McCombie W.R."/>
            <person name="Wing R.A."/>
            <person name="Yuan Q."/>
            <person name="Ouyang S."/>
            <person name="Liu J."/>
            <person name="Jones K.M."/>
            <person name="Gansberger K."/>
            <person name="Moffat K."/>
            <person name="Hill J."/>
            <person name="Tsitrin T."/>
            <person name="Overton L."/>
            <person name="Bera J."/>
            <person name="Kim M."/>
            <person name="Jin S."/>
            <person name="Tallon L."/>
            <person name="Ciecko A."/>
            <person name="Pai G."/>
            <person name="Van Aken S."/>
            <person name="Utterback T."/>
            <person name="Reidmuller S."/>
            <person name="Bormann J."/>
            <person name="Feldblyum T."/>
            <person name="Hsiao J."/>
            <person name="Zismann V."/>
            <person name="Blunt S."/>
            <person name="de Vazeille A.R."/>
            <person name="Shaffer T."/>
            <person name="Koo H."/>
            <person name="Suh B."/>
            <person name="Yang Q."/>
            <person name="Haas B."/>
            <person name="Peterson J."/>
            <person name="Pertea M."/>
            <person name="Volfovsky N."/>
            <person name="Wortman J."/>
            <person name="White O."/>
            <person name="Salzberg S.L."/>
            <person name="Fraser C.M."/>
            <person name="Buell C.R."/>
            <person name="Messing J."/>
            <person name="Song R."/>
            <person name="Fuks G."/>
            <person name="Llaca V."/>
            <person name="Kovchak S."/>
            <person name="Young S."/>
            <person name="Bowers J.E."/>
            <person name="Paterson A.H."/>
            <person name="Johns M.A."/>
            <person name="Mao L."/>
            <person name="Pan H."/>
            <person name="Dean R.A."/>
        </authorList>
    </citation>
    <scope>NUCLEOTIDE SEQUENCE [LARGE SCALE GENOMIC DNA]</scope>
    <source>
        <strain>cv. Nipponbare</strain>
    </source>
</reference>
<reference key="2">
    <citation type="journal article" date="2005" name="Nature">
        <title>The map-based sequence of the rice genome.</title>
        <authorList>
            <consortium name="International rice genome sequencing project (IRGSP)"/>
        </authorList>
    </citation>
    <scope>NUCLEOTIDE SEQUENCE [LARGE SCALE GENOMIC DNA]</scope>
    <source>
        <strain>cv. Nipponbare</strain>
    </source>
</reference>
<reference key="3">
    <citation type="journal article" date="2008" name="Nucleic Acids Res.">
        <title>The rice annotation project database (RAP-DB): 2008 update.</title>
        <authorList>
            <consortium name="The rice annotation project (RAP)"/>
        </authorList>
    </citation>
    <scope>GENOME REANNOTATION</scope>
    <source>
        <strain>cv. Nipponbare</strain>
    </source>
</reference>
<reference key="4">
    <citation type="journal article" date="2013" name="Rice">
        <title>Improvement of the Oryza sativa Nipponbare reference genome using next generation sequence and optical map data.</title>
        <authorList>
            <person name="Kawahara Y."/>
            <person name="de la Bastide M."/>
            <person name="Hamilton J.P."/>
            <person name="Kanamori H."/>
            <person name="McCombie W.R."/>
            <person name="Ouyang S."/>
            <person name="Schwartz D.C."/>
            <person name="Tanaka T."/>
            <person name="Wu J."/>
            <person name="Zhou S."/>
            <person name="Childs K.L."/>
            <person name="Davidson R.M."/>
            <person name="Lin H."/>
            <person name="Quesada-Ocampo L."/>
            <person name="Vaillancourt B."/>
            <person name="Sakai H."/>
            <person name="Lee S.S."/>
            <person name="Kim J."/>
            <person name="Numa H."/>
            <person name="Itoh T."/>
            <person name="Buell C.R."/>
            <person name="Matsumoto T."/>
        </authorList>
    </citation>
    <scope>GENOME REANNOTATION</scope>
    <source>
        <strain>cv. Nipponbare</strain>
    </source>
</reference>
<reference key="5">
    <citation type="journal article" date="2005" name="PLoS Biol.">
        <title>The genomes of Oryza sativa: a history of duplications.</title>
        <authorList>
            <person name="Yu J."/>
            <person name="Wang J."/>
            <person name="Lin W."/>
            <person name="Li S."/>
            <person name="Li H."/>
            <person name="Zhou J."/>
            <person name="Ni P."/>
            <person name="Dong W."/>
            <person name="Hu S."/>
            <person name="Zeng C."/>
            <person name="Zhang J."/>
            <person name="Zhang Y."/>
            <person name="Li R."/>
            <person name="Xu Z."/>
            <person name="Li S."/>
            <person name="Li X."/>
            <person name="Zheng H."/>
            <person name="Cong L."/>
            <person name="Lin L."/>
            <person name="Yin J."/>
            <person name="Geng J."/>
            <person name="Li G."/>
            <person name="Shi J."/>
            <person name="Liu J."/>
            <person name="Lv H."/>
            <person name="Li J."/>
            <person name="Wang J."/>
            <person name="Deng Y."/>
            <person name="Ran L."/>
            <person name="Shi X."/>
            <person name="Wang X."/>
            <person name="Wu Q."/>
            <person name="Li C."/>
            <person name="Ren X."/>
            <person name="Wang J."/>
            <person name="Wang X."/>
            <person name="Li D."/>
            <person name="Liu D."/>
            <person name="Zhang X."/>
            <person name="Ji Z."/>
            <person name="Zhao W."/>
            <person name="Sun Y."/>
            <person name="Zhang Z."/>
            <person name="Bao J."/>
            <person name="Han Y."/>
            <person name="Dong L."/>
            <person name="Ji J."/>
            <person name="Chen P."/>
            <person name="Wu S."/>
            <person name="Liu J."/>
            <person name="Xiao Y."/>
            <person name="Bu D."/>
            <person name="Tan J."/>
            <person name="Yang L."/>
            <person name="Ye C."/>
            <person name="Zhang J."/>
            <person name="Xu J."/>
            <person name="Zhou Y."/>
            <person name="Yu Y."/>
            <person name="Zhang B."/>
            <person name="Zhuang S."/>
            <person name="Wei H."/>
            <person name="Liu B."/>
            <person name="Lei M."/>
            <person name="Yu H."/>
            <person name="Li Y."/>
            <person name="Xu H."/>
            <person name="Wei S."/>
            <person name="He X."/>
            <person name="Fang L."/>
            <person name="Zhang Z."/>
            <person name="Zhang Y."/>
            <person name="Huang X."/>
            <person name="Su Z."/>
            <person name="Tong W."/>
            <person name="Li J."/>
            <person name="Tong Z."/>
            <person name="Li S."/>
            <person name="Ye J."/>
            <person name="Wang L."/>
            <person name="Fang L."/>
            <person name="Lei T."/>
            <person name="Chen C.-S."/>
            <person name="Chen H.-C."/>
            <person name="Xu Z."/>
            <person name="Li H."/>
            <person name="Huang H."/>
            <person name="Zhang F."/>
            <person name="Xu H."/>
            <person name="Li N."/>
            <person name="Zhao C."/>
            <person name="Li S."/>
            <person name="Dong L."/>
            <person name="Huang Y."/>
            <person name="Li L."/>
            <person name="Xi Y."/>
            <person name="Qi Q."/>
            <person name="Li W."/>
            <person name="Zhang B."/>
            <person name="Hu W."/>
            <person name="Zhang Y."/>
            <person name="Tian X."/>
            <person name="Jiao Y."/>
            <person name="Liang X."/>
            <person name="Jin J."/>
            <person name="Gao L."/>
            <person name="Zheng W."/>
            <person name="Hao B."/>
            <person name="Liu S.-M."/>
            <person name="Wang W."/>
            <person name="Yuan L."/>
            <person name="Cao M."/>
            <person name="McDermott J."/>
            <person name="Samudrala R."/>
            <person name="Wang J."/>
            <person name="Wong G.K.-S."/>
            <person name="Yang H."/>
        </authorList>
    </citation>
    <scope>NUCLEOTIDE SEQUENCE [LARGE SCALE GENOMIC DNA]</scope>
    <source>
        <strain>cv. Nipponbare</strain>
    </source>
</reference>
<reference key="6">
    <citation type="journal article" date="2003" name="Science">
        <title>Collection, mapping, and annotation of over 28,000 cDNA clones from japonica rice.</title>
        <authorList>
            <consortium name="The rice full-length cDNA consortium"/>
        </authorList>
    </citation>
    <scope>NUCLEOTIDE SEQUENCE [LARGE SCALE MRNA]</scope>
    <source>
        <strain>cv. Nipponbare</strain>
    </source>
</reference>
<reference key="7">
    <citation type="journal article" date="2009" name="Plant Mol. Biol.">
        <title>Identification and expression profiling analysis of TIFY family genes involved in stress and phytohormone responses in rice.</title>
        <authorList>
            <person name="Ye H."/>
            <person name="Du H."/>
            <person name="Tang N."/>
            <person name="Li X."/>
            <person name="Xiong L."/>
        </authorList>
    </citation>
    <scope>GENE FAMILY</scope>
    <scope>NOMENCLATURE</scope>
    <scope>INDUCTION</scope>
</reference>
<reference key="8">
    <citation type="journal article" date="2011" name="Plant J.">
        <title>OsbHLH148, a basic helix-loop-helix protein, interacts with OsJAZ proteins in a jasmonate signaling pathway leading to drought tolerance in rice.</title>
        <authorList>
            <person name="Seo J.S."/>
            <person name="Joo J."/>
            <person name="Kim M.J."/>
            <person name="Kim Y.K."/>
            <person name="Nahm B.H."/>
            <person name="Song S.I."/>
            <person name="Cheong J.J."/>
            <person name="Lee J.S."/>
            <person name="Kim J.K."/>
            <person name="Choi Y.D."/>
        </authorList>
    </citation>
    <scope>FUNCTION</scope>
    <scope>INTERACTION WITH BHLH148 AND COI1A</scope>
    <scope>PTM</scope>
</reference>
<reference key="9">
    <citation type="journal article" date="2013" name="PLoS ONE">
        <title>Oryza sativa COI homologues restore jasmonate signal transduction in Arabidopsis coi1-1 mutants.</title>
        <authorList>
            <person name="Lee H.Y."/>
            <person name="Seo J.S."/>
            <person name="Cho J.H."/>
            <person name="Jung H."/>
            <person name="Kim J.K."/>
            <person name="Lee J.S."/>
            <person name="Rhee S."/>
            <person name="Do Choi Y."/>
        </authorList>
    </citation>
    <scope>INTERACTION WITH COI1A; COI1B AND COI2</scope>
</reference>
<sequence length="171" mass="18270">MAAAGSSSRFAVTCGLLSQYMRERQQPQPPVTVLEAVAEEEEEEDARTMQLFPPRAAAADGVATPSAGTAPLTIFYDGRMVVVDDVPVEKAAELMRLAGSACSPPQPAHAAALPEMPIARKASLQRFLQKRKHRITTTSEPYKKAAVASPAPEKSFAVAPVKDEPATWLGL</sequence>
<protein>
    <recommendedName>
        <fullName evidence="10">Protein TIFY 11d</fullName>
        <shortName evidence="8">OsTIFY11d</shortName>
    </recommendedName>
    <alternativeName>
        <fullName evidence="10">Jasmonate ZIM domain-containing protein 12</fullName>
        <shortName evidence="8">OsJAZ12</shortName>
    </alternativeName>
    <alternativeName>
        <fullName evidence="9">OsJAZ1</fullName>
    </alternativeName>
</protein>
<gene>
    <name evidence="8" type="primary">TIFY11D</name>
    <name evidence="8" type="synonym">JAZ12</name>
    <name evidence="13" type="ordered locus">Os10g0392400</name>
    <name evidence="12" type="ordered locus">LOC_Os10g25290</name>
    <name evidence="14" type="ORF">OsJ_31396</name>
</gene>